<evidence type="ECO:0000255" key="1"/>
<evidence type="ECO:0000269" key="2">
    <source>
    </source>
</evidence>
<evidence type="ECO:0000269" key="3">
    <source ref="2"/>
</evidence>
<evidence type="ECO:0000305" key="4"/>
<dbReference type="EMBL" id="X57075">
    <property type="protein sequence ID" value="CAA40358.1"/>
    <property type="molecule type" value="Genomic_DNA"/>
</dbReference>
<dbReference type="EMBL" id="X57075">
    <property type="protein sequence ID" value="CAA40359.1"/>
    <property type="status" value="ALT_INIT"/>
    <property type="molecule type" value="Genomic_DNA"/>
</dbReference>
<dbReference type="EMBL" id="X57075">
    <property type="protein sequence ID" value="CAA40360.1"/>
    <property type="status" value="ALT_INIT"/>
    <property type="molecule type" value="Genomic_DNA"/>
</dbReference>
<dbReference type="EMBL" id="AY581424">
    <property type="protein sequence ID" value="AAS79318.1"/>
    <property type="molecule type" value="Genomic_DNA"/>
</dbReference>
<dbReference type="EMBL" id="BC121097">
    <property type="protein sequence ID" value="AAI21098.1"/>
    <property type="molecule type" value="mRNA"/>
</dbReference>
<dbReference type="EMBL" id="BC121098">
    <property type="protein sequence ID" value="AAI21099.1"/>
    <property type="molecule type" value="mRNA"/>
</dbReference>
<dbReference type="EMBL" id="X63454">
    <property type="protein sequence ID" value="CAA45054.1"/>
    <property type="molecule type" value="mRNA"/>
</dbReference>
<dbReference type="EMBL" id="X14071">
    <property type="protein sequence ID" value="CAB37648.2"/>
    <property type="molecule type" value="Genomic_DNA"/>
</dbReference>
<dbReference type="EMBL" id="X14072">
    <property type="protein sequence ID" value="CAB37648.2"/>
    <property type="status" value="JOINED"/>
    <property type="molecule type" value="Genomic_DNA"/>
</dbReference>
<dbReference type="EMBL" id="X14073">
    <property type="protein sequence ID" value="CAB37648.2"/>
    <property type="status" value="JOINED"/>
    <property type="molecule type" value="Genomic_DNA"/>
</dbReference>
<dbReference type="CCDS" id="CCDS8527.1"/>
<dbReference type="PIR" id="S20102">
    <property type="entry name" value="S20102"/>
</dbReference>
<dbReference type="RefSeq" id="NP_066276.2">
    <property type="nucleotide sequence ID" value="NM_020996.2"/>
</dbReference>
<dbReference type="SMR" id="P10767"/>
<dbReference type="BioGRID" id="108542">
    <property type="interactions" value="4"/>
</dbReference>
<dbReference type="DIP" id="DIP-6035N"/>
<dbReference type="FunCoup" id="P10767">
    <property type="interactions" value="908"/>
</dbReference>
<dbReference type="IntAct" id="P10767">
    <property type="interactions" value="3"/>
</dbReference>
<dbReference type="STRING" id="9606.ENSP00000228837"/>
<dbReference type="GlyCosmos" id="P10767">
    <property type="glycosylation" value="1 site, No reported glycans"/>
</dbReference>
<dbReference type="GlyGen" id="P10767">
    <property type="glycosylation" value="2 sites"/>
</dbReference>
<dbReference type="PhosphoSitePlus" id="P10767"/>
<dbReference type="BioMuta" id="FGF6"/>
<dbReference type="DMDM" id="1169676"/>
<dbReference type="MassIVE" id="P10767"/>
<dbReference type="PaxDb" id="9606-ENSP00000228837"/>
<dbReference type="Antibodypedia" id="41814">
    <property type="antibodies" value="197 antibodies from 22 providers"/>
</dbReference>
<dbReference type="DNASU" id="2251"/>
<dbReference type="Ensembl" id="ENST00000228837.3">
    <property type="protein sequence ID" value="ENSP00000228837.2"/>
    <property type="gene ID" value="ENSG00000111241.3"/>
</dbReference>
<dbReference type="GeneID" id="2251"/>
<dbReference type="KEGG" id="hsa:2251"/>
<dbReference type="MANE-Select" id="ENST00000228837.3">
    <property type="protein sequence ID" value="ENSP00000228837.2"/>
    <property type="RefSeq nucleotide sequence ID" value="NM_020996.3"/>
    <property type="RefSeq protein sequence ID" value="NP_066276.2"/>
</dbReference>
<dbReference type="UCSC" id="uc001qmr.2">
    <property type="organism name" value="human"/>
</dbReference>
<dbReference type="AGR" id="HGNC:3684"/>
<dbReference type="CTD" id="2251"/>
<dbReference type="DisGeNET" id="2251"/>
<dbReference type="GeneCards" id="FGF6"/>
<dbReference type="HGNC" id="HGNC:3684">
    <property type="gene designation" value="FGF6"/>
</dbReference>
<dbReference type="HPA" id="ENSG00000111241">
    <property type="expression patterns" value="Group enriched (skeletal muscle, tongue)"/>
</dbReference>
<dbReference type="MalaCards" id="FGF6"/>
<dbReference type="MIM" id="134921">
    <property type="type" value="gene"/>
</dbReference>
<dbReference type="neXtProt" id="NX_P10767"/>
<dbReference type="OpenTargets" id="ENSG00000111241"/>
<dbReference type="PharmGKB" id="PA28123"/>
<dbReference type="VEuPathDB" id="HostDB:ENSG00000111241"/>
<dbReference type="eggNOG" id="KOG3885">
    <property type="taxonomic scope" value="Eukaryota"/>
</dbReference>
<dbReference type="GeneTree" id="ENSGT00940000157821"/>
<dbReference type="HOGENOM" id="CLU_081609_4_1_1"/>
<dbReference type="InParanoid" id="P10767"/>
<dbReference type="OMA" id="RISGAHN"/>
<dbReference type="OrthoDB" id="5960247at2759"/>
<dbReference type="PAN-GO" id="P10767">
    <property type="GO annotations" value="11 GO annotations based on evolutionary models"/>
</dbReference>
<dbReference type="PhylomeDB" id="P10767"/>
<dbReference type="TreeFam" id="TF317805"/>
<dbReference type="PathwayCommons" id="P10767"/>
<dbReference type="Reactome" id="R-HSA-109704">
    <property type="pathway name" value="PI3K Cascade"/>
</dbReference>
<dbReference type="Reactome" id="R-HSA-1257604">
    <property type="pathway name" value="PIP3 activates AKT signaling"/>
</dbReference>
<dbReference type="Reactome" id="R-HSA-1839122">
    <property type="pathway name" value="Signaling by activated point mutants of FGFR1"/>
</dbReference>
<dbReference type="Reactome" id="R-HSA-190322">
    <property type="pathway name" value="FGFR4 ligand binding and activation"/>
</dbReference>
<dbReference type="Reactome" id="R-HSA-190373">
    <property type="pathway name" value="FGFR1c ligand binding and activation"/>
</dbReference>
<dbReference type="Reactome" id="R-HSA-190375">
    <property type="pathway name" value="FGFR2c ligand binding and activation"/>
</dbReference>
<dbReference type="Reactome" id="R-HSA-2033519">
    <property type="pathway name" value="Activated point mutants of FGFR2"/>
</dbReference>
<dbReference type="Reactome" id="R-HSA-2219530">
    <property type="pathway name" value="Constitutive Signaling by Aberrant PI3K in Cancer"/>
</dbReference>
<dbReference type="Reactome" id="R-HSA-5654219">
    <property type="pathway name" value="Phospholipase C-mediated cascade: FGFR1"/>
</dbReference>
<dbReference type="Reactome" id="R-HSA-5654221">
    <property type="pathway name" value="Phospholipase C-mediated cascade, FGFR2"/>
</dbReference>
<dbReference type="Reactome" id="R-HSA-5654228">
    <property type="pathway name" value="Phospholipase C-mediated cascade, FGFR4"/>
</dbReference>
<dbReference type="Reactome" id="R-HSA-5654687">
    <property type="pathway name" value="Downstream signaling of activated FGFR1"/>
</dbReference>
<dbReference type="Reactome" id="R-HSA-5654688">
    <property type="pathway name" value="SHC-mediated cascade:FGFR1"/>
</dbReference>
<dbReference type="Reactome" id="R-HSA-5654689">
    <property type="pathway name" value="PI-3K cascade:FGFR1"/>
</dbReference>
<dbReference type="Reactome" id="R-HSA-5654693">
    <property type="pathway name" value="FRS-mediated FGFR1 signaling"/>
</dbReference>
<dbReference type="Reactome" id="R-HSA-5654695">
    <property type="pathway name" value="PI-3K cascade:FGFR2"/>
</dbReference>
<dbReference type="Reactome" id="R-HSA-5654699">
    <property type="pathway name" value="SHC-mediated cascade:FGFR2"/>
</dbReference>
<dbReference type="Reactome" id="R-HSA-5654700">
    <property type="pathway name" value="FRS-mediated FGFR2 signaling"/>
</dbReference>
<dbReference type="Reactome" id="R-HSA-5654712">
    <property type="pathway name" value="FRS-mediated FGFR4 signaling"/>
</dbReference>
<dbReference type="Reactome" id="R-HSA-5654719">
    <property type="pathway name" value="SHC-mediated cascade:FGFR4"/>
</dbReference>
<dbReference type="Reactome" id="R-HSA-5654720">
    <property type="pathway name" value="PI-3K cascade:FGFR4"/>
</dbReference>
<dbReference type="Reactome" id="R-HSA-5654726">
    <property type="pathway name" value="Negative regulation of FGFR1 signaling"/>
</dbReference>
<dbReference type="Reactome" id="R-HSA-5654727">
    <property type="pathway name" value="Negative regulation of FGFR2 signaling"/>
</dbReference>
<dbReference type="Reactome" id="R-HSA-5654733">
    <property type="pathway name" value="Negative regulation of FGFR4 signaling"/>
</dbReference>
<dbReference type="Reactome" id="R-HSA-5655253">
    <property type="pathway name" value="Signaling by FGFR2 in disease"/>
</dbReference>
<dbReference type="Reactome" id="R-HSA-5655302">
    <property type="pathway name" value="Signaling by FGFR1 in disease"/>
</dbReference>
<dbReference type="Reactome" id="R-HSA-5673001">
    <property type="pathway name" value="RAF/MAP kinase cascade"/>
</dbReference>
<dbReference type="Reactome" id="R-HSA-6811558">
    <property type="pathway name" value="PI5P, PP2A and IER3 Regulate PI3K/AKT Signaling"/>
</dbReference>
<dbReference type="SignaLink" id="P10767"/>
<dbReference type="SIGNOR" id="P10767"/>
<dbReference type="BioGRID-ORCS" id="2251">
    <property type="hits" value="16 hits in 1150 CRISPR screens"/>
</dbReference>
<dbReference type="GeneWiki" id="FGF6"/>
<dbReference type="GenomeRNAi" id="2251"/>
<dbReference type="Pharos" id="P10767">
    <property type="development level" value="Tbio"/>
</dbReference>
<dbReference type="PRO" id="PR:P10767"/>
<dbReference type="Proteomes" id="UP000005640">
    <property type="component" value="Chromosome 12"/>
</dbReference>
<dbReference type="RNAct" id="P10767">
    <property type="molecule type" value="protein"/>
</dbReference>
<dbReference type="Bgee" id="ENSG00000111241">
    <property type="expression patterns" value="Expressed in hindlimb stylopod muscle and 54 other cell types or tissues"/>
</dbReference>
<dbReference type="ExpressionAtlas" id="P10767">
    <property type="expression patterns" value="baseline and differential"/>
</dbReference>
<dbReference type="GO" id="GO:0005737">
    <property type="term" value="C:cytoplasm"/>
    <property type="evidence" value="ECO:0000318"/>
    <property type="project" value="GO_Central"/>
</dbReference>
<dbReference type="GO" id="GO:0005576">
    <property type="term" value="C:extracellular region"/>
    <property type="evidence" value="ECO:0000304"/>
    <property type="project" value="Reactome"/>
</dbReference>
<dbReference type="GO" id="GO:0005615">
    <property type="term" value="C:extracellular space"/>
    <property type="evidence" value="ECO:0000318"/>
    <property type="project" value="GO_Central"/>
</dbReference>
<dbReference type="GO" id="GO:0042383">
    <property type="term" value="C:sarcolemma"/>
    <property type="evidence" value="ECO:0007669"/>
    <property type="project" value="Ensembl"/>
</dbReference>
<dbReference type="GO" id="GO:0005104">
    <property type="term" value="F:fibroblast growth factor receptor binding"/>
    <property type="evidence" value="ECO:0000318"/>
    <property type="project" value="GO_Central"/>
</dbReference>
<dbReference type="GO" id="GO:0008083">
    <property type="term" value="F:growth factor activity"/>
    <property type="evidence" value="ECO:0000318"/>
    <property type="project" value="GO_Central"/>
</dbReference>
<dbReference type="GO" id="GO:0001525">
    <property type="term" value="P:angiogenesis"/>
    <property type="evidence" value="ECO:0007669"/>
    <property type="project" value="UniProtKB-KW"/>
</dbReference>
<dbReference type="GO" id="GO:0001502">
    <property type="term" value="P:cartilage condensation"/>
    <property type="evidence" value="ECO:0007669"/>
    <property type="project" value="Ensembl"/>
</dbReference>
<dbReference type="GO" id="GO:0008543">
    <property type="term" value="P:fibroblast growth factor receptor signaling pathway"/>
    <property type="evidence" value="ECO:0000316"/>
    <property type="project" value="MGI"/>
</dbReference>
<dbReference type="GO" id="GO:0045445">
    <property type="term" value="P:myoblast differentiation"/>
    <property type="evidence" value="ECO:0007669"/>
    <property type="project" value="Ensembl"/>
</dbReference>
<dbReference type="GO" id="GO:0022008">
    <property type="term" value="P:neurogenesis"/>
    <property type="evidence" value="ECO:0000318"/>
    <property type="project" value="GO_Central"/>
</dbReference>
<dbReference type="GO" id="GO:0051781">
    <property type="term" value="P:positive regulation of cell division"/>
    <property type="evidence" value="ECO:0007669"/>
    <property type="project" value="UniProtKB-KW"/>
</dbReference>
<dbReference type="GO" id="GO:0008284">
    <property type="term" value="P:positive regulation of cell population proliferation"/>
    <property type="evidence" value="ECO:0000316"/>
    <property type="project" value="MGI"/>
</dbReference>
<dbReference type="GO" id="GO:0043410">
    <property type="term" value="P:positive regulation of MAPK cascade"/>
    <property type="evidence" value="ECO:0000318"/>
    <property type="project" value="GO_Central"/>
</dbReference>
<dbReference type="GO" id="GO:0030334">
    <property type="term" value="P:regulation of cell migration"/>
    <property type="evidence" value="ECO:0000318"/>
    <property type="project" value="GO_Central"/>
</dbReference>
<dbReference type="CDD" id="cd23318">
    <property type="entry name" value="beta-trefoil_FGF6"/>
    <property type="match status" value="1"/>
</dbReference>
<dbReference type="FunFam" id="2.80.10.50:FF:000033">
    <property type="entry name" value="Fibroblast growth factor"/>
    <property type="match status" value="1"/>
</dbReference>
<dbReference type="Gene3D" id="2.80.10.50">
    <property type="match status" value="1"/>
</dbReference>
<dbReference type="InterPro" id="IPR002209">
    <property type="entry name" value="Fibroblast_GF_fam"/>
</dbReference>
<dbReference type="InterPro" id="IPR008996">
    <property type="entry name" value="IL1/FGF"/>
</dbReference>
<dbReference type="PANTHER" id="PTHR11486">
    <property type="entry name" value="FIBROBLAST GROWTH FACTOR"/>
    <property type="match status" value="1"/>
</dbReference>
<dbReference type="Pfam" id="PF00167">
    <property type="entry name" value="FGF"/>
    <property type="match status" value="1"/>
</dbReference>
<dbReference type="PRINTS" id="PR00263">
    <property type="entry name" value="HBGFFGF"/>
</dbReference>
<dbReference type="PRINTS" id="PR00262">
    <property type="entry name" value="IL1HBGF"/>
</dbReference>
<dbReference type="SMART" id="SM00442">
    <property type="entry name" value="FGF"/>
    <property type="match status" value="1"/>
</dbReference>
<dbReference type="SUPFAM" id="SSF50353">
    <property type="entry name" value="Cytokine"/>
    <property type="match status" value="1"/>
</dbReference>
<dbReference type="PROSITE" id="PS00247">
    <property type="entry name" value="HBGF_FGF"/>
    <property type="match status" value="1"/>
</dbReference>
<name>FGF6_HUMAN</name>
<feature type="signal peptide" evidence="1">
    <location>
        <begin position="1"/>
        <end position="37"/>
    </location>
</feature>
<feature type="chain" id="PRO_0000008961" description="Fibroblast growth factor 6">
    <location>
        <begin position="38"/>
        <end position="208"/>
    </location>
</feature>
<feature type="glycosylation site" description="N-linked (GlcNAc...) asparagine" evidence="1">
    <location>
        <position position="45"/>
    </location>
</feature>
<feature type="disulfide bond" evidence="1">
    <location>
        <begin position="90"/>
        <end position="157"/>
    </location>
</feature>
<feature type="sequence variant" id="VAR_018882" description="In dbSNP:rs11613495." evidence="3">
    <original>V</original>
    <variation>A</variation>
    <location>
        <position position="36"/>
    </location>
</feature>
<feature type="sequence variant" id="VAR_018883" description="In dbSNP:rs17183529." evidence="3">
    <original>A</original>
    <variation>V</variation>
    <location>
        <position position="63"/>
    </location>
</feature>
<feature type="sequence variant" id="VAR_018884" description="In dbSNP:rs7961645." evidence="3">
    <original>D</original>
    <variation>V</variation>
    <location>
        <position position="174"/>
    </location>
</feature>
<feature type="sequence variant" id="VAR_018885" description="In dbSNP:rs17183778." evidence="3">
    <original>R</original>
    <variation>W</variation>
    <location>
        <position position="191"/>
    </location>
</feature>
<feature type="sequence conflict" description="In Ref. 5; CAB37648." evidence="4" ref="5">
    <original>V</original>
    <variation>G</variation>
    <location>
        <position position="100"/>
    </location>
</feature>
<gene>
    <name type="primary">FGF6</name>
    <name type="synonym">HST2</name>
    <name type="synonym">HSTF2</name>
</gene>
<comment type="function">
    <text evidence="2">Plays an important role in the regulation of cell proliferation, cell differentiation, angiogenesis and myogenesis, and is required for normal muscle regeneration.</text>
</comment>
<comment type="subunit">
    <text evidence="2">Interacts with FGFR1, FGFR2 and FGFR4. Affinity between fibroblast growth factors (FGFs) and their receptors is increased by heparan sulfate glycosaminoglycans that function as coreceptors.</text>
</comment>
<comment type="interaction">
    <interactant intactId="EBI-11479013">
        <id>P10767</id>
    </interactant>
    <interactant intactId="EBI-749635">
        <id>P61601</id>
        <label>NCALD</label>
    </interactant>
    <organismsDiffer>false</organismsDiffer>
    <experiments>3</experiments>
</comment>
<comment type="subcellular location">
    <subcellularLocation>
        <location>Secreted</location>
        <location>Extracellular space</location>
    </subcellularLocation>
</comment>
<comment type="tissue specificity">
    <text>Leukemia cell lines with platelet/ megakaryocytic differentiation potential.</text>
</comment>
<comment type="similarity">
    <text evidence="4">Belongs to the heparin-binding growth factors family.</text>
</comment>
<comment type="sequence caution" evidence="4">
    <conflict type="erroneous initiation">
        <sequence resource="EMBL-CDS" id="CAA40359"/>
    </conflict>
</comment>
<comment type="sequence caution" evidence="4">
    <conflict type="erroneous initiation">
        <sequence resource="EMBL-CDS" id="CAA40360"/>
    </conflict>
</comment>
<keyword id="KW-0037">Angiogenesis</keyword>
<keyword id="KW-0217">Developmental protein</keyword>
<keyword id="KW-0221">Differentiation</keyword>
<keyword id="KW-1015">Disulfide bond</keyword>
<keyword id="KW-0325">Glycoprotein</keyword>
<keyword id="KW-0339">Growth factor</keyword>
<keyword id="KW-0497">Mitogen</keyword>
<keyword id="KW-1267">Proteomics identification</keyword>
<keyword id="KW-0656">Proto-oncogene</keyword>
<keyword id="KW-1185">Reference proteome</keyword>
<keyword id="KW-0964">Secreted</keyword>
<keyword id="KW-0732">Signal</keyword>
<proteinExistence type="evidence at protein level"/>
<sequence>MALGQKLFITMSRGAGRLQGTLWALVFLGILVGMVVPSPAGTRANNTLLDSRGWGTLLSRSRAGLAGEIAGVNWESGYLVGIKRQRRLYCNVGIGFHLQVLPDGRISGTHEENPYSLLEISTVERGVVSLFGVRSALFVAMNSKGRLYATPSFQEECKFRETLLPNNYNAYESDLYQGTYIALSKYGRVKRGSKVSPIMTVTHFLPRI</sequence>
<protein>
    <recommendedName>
        <fullName>Fibroblast growth factor 6</fullName>
        <shortName>FGF-6</shortName>
    </recommendedName>
    <alternativeName>
        <fullName>Heparin secretory-transforming protein 2</fullName>
        <shortName>HST-2</shortName>
        <shortName>HSTF-2</shortName>
    </alternativeName>
    <alternativeName>
        <fullName>Heparin-binding growth factor 6</fullName>
        <shortName>HBGF-6</shortName>
    </alternativeName>
</protein>
<accession>P10767</accession>
<accession>Q0VAE1</accession>
<organism>
    <name type="scientific">Homo sapiens</name>
    <name type="common">Human</name>
    <dbReference type="NCBI Taxonomy" id="9606"/>
    <lineage>
        <taxon>Eukaryota</taxon>
        <taxon>Metazoa</taxon>
        <taxon>Chordata</taxon>
        <taxon>Craniata</taxon>
        <taxon>Vertebrata</taxon>
        <taxon>Euteleostomi</taxon>
        <taxon>Mammalia</taxon>
        <taxon>Eutheria</taxon>
        <taxon>Euarchontoglires</taxon>
        <taxon>Primates</taxon>
        <taxon>Haplorrhini</taxon>
        <taxon>Catarrhini</taxon>
        <taxon>Hominidae</taxon>
        <taxon>Homo</taxon>
    </lineage>
</organism>
<reference key="1">
    <citation type="journal article" date="1991" name="Oncogene">
        <title>Putative structure of the FGF6 gene product and role of the signal peptide.</title>
        <authorList>
            <person name="Coulier F."/>
            <person name="Batoz M."/>
            <person name="Marics I."/>
            <person name="de Lapeyriere O."/>
            <person name="Birnbaum D."/>
        </authorList>
    </citation>
    <scope>NUCLEOTIDE SEQUENCE [GENOMIC DNA]</scope>
</reference>
<reference key="2">
    <citation type="submission" date="2004-03" db="EMBL/GenBank/DDBJ databases">
        <authorList>
            <consortium name="NIEHS SNPs program"/>
        </authorList>
    </citation>
    <scope>NUCLEOTIDE SEQUENCE [GENOMIC DNA]</scope>
    <scope>VARIANTS ALA-36; VAL-63; VAL-174 AND TRP-191</scope>
</reference>
<reference key="3">
    <citation type="journal article" date="2004" name="Genome Res.">
        <title>The status, quality, and expansion of the NIH full-length cDNA project: the Mammalian Gene Collection (MGC).</title>
        <authorList>
            <consortium name="The MGC Project Team"/>
        </authorList>
    </citation>
    <scope>NUCLEOTIDE SEQUENCE [LARGE SCALE MRNA]</scope>
</reference>
<reference key="4">
    <citation type="journal article" date="1992" name="Oncogene">
        <title>Human hst-2 (FGF-6) oncogene: cDNA cloning and characterization.</title>
        <authorList>
            <person name="Iida S."/>
            <person name="Yoshida T."/>
            <person name="Naito K."/>
            <person name="Sakamoto H."/>
            <person name="Katoh O."/>
            <person name="Hirohashi S."/>
            <person name="Sato T."/>
            <person name="Onda M."/>
            <person name="Sugimura T."/>
            <person name="Terada M."/>
        </authorList>
    </citation>
    <scope>NUCLEOTIDE SEQUENCE [MRNA] OF 11-208</scope>
</reference>
<reference key="5">
    <citation type="journal article" date="1989" name="Oncogene">
        <title>Characterization of the HST-related FGF.6 gene, a new member of the fibroblast growth factor gene family.</title>
        <authorList>
            <person name="Marics I."/>
            <person name="Adelaide J."/>
            <person name="Raybaud F."/>
            <person name="Mattei M.-G."/>
            <person name="Coulier F."/>
            <person name="Planche J."/>
            <person name="de Lapeyriere O."/>
            <person name="Birnbaum D."/>
        </authorList>
    </citation>
    <scope>NUCLEOTIDE SEQUENCE [GENOMIC DNA] OF 81-208</scope>
</reference>
<reference key="6">
    <citation type="journal article" date="1996" name="J. Biol. Chem.">
        <title>Receptor specificity of the fibroblast growth factor family.</title>
        <authorList>
            <person name="Ornitz D.M."/>
            <person name="Xu J."/>
            <person name="Colvin J.S."/>
            <person name="McEwen D.G."/>
            <person name="MacArthur C.A."/>
            <person name="Coulier F."/>
            <person name="Gao G."/>
            <person name="Goldfarb M."/>
        </authorList>
    </citation>
    <scope>INTERACTION WITH FGFR1; FGFR2 AND FGFR4</scope>
    <scope>FUNCTION IN CELL PROLIFERATION</scope>
</reference>
<reference key="7">
    <citation type="journal article" date="2010" name="Nat. Rev. Cancer">
        <title>Fibroblast growth factor signalling: from development to cancer.</title>
        <authorList>
            <person name="Turner N."/>
            <person name="Grose R."/>
        </authorList>
    </citation>
    <scope>REVIEW</scope>
</reference>